<dbReference type="EC" id="4.3.1.18" evidence="1"/>
<dbReference type="EMBL" id="CP001138">
    <property type="protein sequence ID" value="ACH49962.1"/>
    <property type="molecule type" value="Genomic_DNA"/>
</dbReference>
<dbReference type="RefSeq" id="WP_000427987.1">
    <property type="nucleotide sequence ID" value="NC_011149.1"/>
</dbReference>
<dbReference type="SMR" id="B5EY75"/>
<dbReference type="KEGG" id="sea:SeAg_B4027"/>
<dbReference type="HOGENOM" id="CLU_035707_0_0_6"/>
<dbReference type="Proteomes" id="UP000008819">
    <property type="component" value="Chromosome"/>
</dbReference>
<dbReference type="GO" id="GO:0008721">
    <property type="term" value="F:D-serine ammonia-lyase activity"/>
    <property type="evidence" value="ECO:0007669"/>
    <property type="project" value="UniProtKB-EC"/>
</dbReference>
<dbReference type="GO" id="GO:0016836">
    <property type="term" value="F:hydro-lyase activity"/>
    <property type="evidence" value="ECO:0007669"/>
    <property type="project" value="UniProtKB-UniRule"/>
</dbReference>
<dbReference type="GO" id="GO:0030170">
    <property type="term" value="F:pyridoxal phosphate binding"/>
    <property type="evidence" value="ECO:0007669"/>
    <property type="project" value="InterPro"/>
</dbReference>
<dbReference type="GO" id="GO:0036088">
    <property type="term" value="P:D-serine catabolic process"/>
    <property type="evidence" value="ECO:0007669"/>
    <property type="project" value="TreeGrafter"/>
</dbReference>
<dbReference type="GO" id="GO:0009097">
    <property type="term" value="P:isoleucine biosynthetic process"/>
    <property type="evidence" value="ECO:0007669"/>
    <property type="project" value="TreeGrafter"/>
</dbReference>
<dbReference type="CDD" id="cd06447">
    <property type="entry name" value="D-Ser-dehyd"/>
    <property type="match status" value="1"/>
</dbReference>
<dbReference type="FunFam" id="3.40.50.1100:FF:000018">
    <property type="entry name" value="D-serine dehydratase"/>
    <property type="match status" value="1"/>
</dbReference>
<dbReference type="Gene3D" id="3.40.50.1100">
    <property type="match status" value="2"/>
</dbReference>
<dbReference type="HAMAP" id="MF_01030">
    <property type="entry name" value="D_Ser_dehydrat"/>
    <property type="match status" value="1"/>
</dbReference>
<dbReference type="InterPro" id="IPR011780">
    <property type="entry name" value="D_Ser_am_lyase"/>
</dbReference>
<dbReference type="InterPro" id="IPR050147">
    <property type="entry name" value="Ser/Thr_Dehydratase"/>
</dbReference>
<dbReference type="InterPro" id="IPR000634">
    <property type="entry name" value="Ser/Thr_deHydtase_PyrdxlP-BS"/>
</dbReference>
<dbReference type="InterPro" id="IPR001926">
    <property type="entry name" value="TrpB-like_PALP"/>
</dbReference>
<dbReference type="InterPro" id="IPR036052">
    <property type="entry name" value="TrpB-like_PALP_sf"/>
</dbReference>
<dbReference type="NCBIfam" id="TIGR02035">
    <property type="entry name" value="D_Ser_am_lyase"/>
    <property type="match status" value="1"/>
</dbReference>
<dbReference type="NCBIfam" id="NF002823">
    <property type="entry name" value="PRK02991.1"/>
    <property type="match status" value="1"/>
</dbReference>
<dbReference type="PANTHER" id="PTHR48078:SF9">
    <property type="entry name" value="D-SERINE DEHYDRATASE"/>
    <property type="match status" value="1"/>
</dbReference>
<dbReference type="PANTHER" id="PTHR48078">
    <property type="entry name" value="THREONINE DEHYDRATASE, MITOCHONDRIAL-RELATED"/>
    <property type="match status" value="1"/>
</dbReference>
<dbReference type="Pfam" id="PF00291">
    <property type="entry name" value="PALP"/>
    <property type="match status" value="1"/>
</dbReference>
<dbReference type="SUPFAM" id="SSF53686">
    <property type="entry name" value="Tryptophan synthase beta subunit-like PLP-dependent enzymes"/>
    <property type="match status" value="1"/>
</dbReference>
<dbReference type="PROSITE" id="PS00165">
    <property type="entry name" value="DEHYDRATASE_SER_THR"/>
    <property type="match status" value="1"/>
</dbReference>
<gene>
    <name evidence="1" type="primary">dsdA</name>
    <name type="ordered locus">SeAg_B4027</name>
</gene>
<proteinExistence type="inferred from homology"/>
<protein>
    <recommendedName>
        <fullName evidence="1">D-serine dehydratase</fullName>
        <ecNumber evidence="1">4.3.1.18</ecNumber>
    </recommendedName>
    <alternativeName>
        <fullName evidence="1">D-serine deaminase</fullName>
        <shortName evidence="1">DSD</shortName>
    </alternativeName>
</protein>
<comment type="catalytic activity">
    <reaction evidence="1">
        <text>D-serine = pyruvate + NH4(+)</text>
        <dbReference type="Rhea" id="RHEA:13977"/>
        <dbReference type="ChEBI" id="CHEBI:15361"/>
        <dbReference type="ChEBI" id="CHEBI:28938"/>
        <dbReference type="ChEBI" id="CHEBI:35247"/>
        <dbReference type="EC" id="4.3.1.18"/>
    </reaction>
</comment>
<comment type="cofactor">
    <cofactor evidence="1">
        <name>pyridoxal 5'-phosphate</name>
        <dbReference type="ChEBI" id="CHEBI:597326"/>
    </cofactor>
</comment>
<comment type="subunit">
    <text evidence="1">Monomer.</text>
</comment>
<comment type="similarity">
    <text evidence="1">Belongs to the serine/threonine dehydratase family. DsdA subfamily.</text>
</comment>
<name>SDHD_SALA4</name>
<feature type="chain" id="PRO_1000197944" description="D-serine dehydratase">
    <location>
        <begin position="1"/>
        <end position="440"/>
    </location>
</feature>
<feature type="modified residue" description="N6-(pyridoxal phosphate)lysine" evidence="1">
    <location>
        <position position="116"/>
    </location>
</feature>
<keyword id="KW-0456">Lyase</keyword>
<keyword id="KW-0663">Pyridoxal phosphate</keyword>
<sequence length="440" mass="47384">MENIQKLIARYPLVEDLVALKETTWFNPGATSLAQGLPYVGLTEQDVNAAHDRLARFAPYLAKAFPQTAAAGGMIESDVVAIPAMQKRLEKEYGQTIDGEMLLKKDSHLAISGSIKARGGIYEVLTHAEKLALEAGLLTTDDDYSVLLSPEFKQFFSQYSIAVGSTGNLGLSIGIMSACIGFKVTVHMSADARAWKKAKLRSHGVTVVEYEDDYGVAVEQGRKAAQSDPNCFFIDDENSRTLFLGYAVAGQRLKAQFAQQGRVVDASHPLFVYLPCGVGGGPGGVAFGLKLAFGDNVHCFFAEPTHSPCMLLGVYTGLHDAISVQDIGIDNLTAADGLAVGRASGFVGRAMERLLDGLYTLDDQTMYDMLGWLAQEEGIRLEPSALAGMAGPQRICAAAEYQQRHGFSQTQLGNATHLVWATGGGMVPEDEMEQYLAKGR</sequence>
<reference key="1">
    <citation type="journal article" date="2011" name="J. Bacteriol.">
        <title>Comparative genomics of 28 Salmonella enterica isolates: evidence for CRISPR-mediated adaptive sublineage evolution.</title>
        <authorList>
            <person name="Fricke W.F."/>
            <person name="Mammel M.K."/>
            <person name="McDermott P.F."/>
            <person name="Tartera C."/>
            <person name="White D.G."/>
            <person name="Leclerc J.E."/>
            <person name="Ravel J."/>
            <person name="Cebula T.A."/>
        </authorList>
    </citation>
    <scope>NUCLEOTIDE SEQUENCE [LARGE SCALE GENOMIC DNA]</scope>
    <source>
        <strain>SL483</strain>
    </source>
</reference>
<accession>B5EY75</accession>
<organism>
    <name type="scientific">Salmonella agona (strain SL483)</name>
    <dbReference type="NCBI Taxonomy" id="454166"/>
    <lineage>
        <taxon>Bacteria</taxon>
        <taxon>Pseudomonadati</taxon>
        <taxon>Pseudomonadota</taxon>
        <taxon>Gammaproteobacteria</taxon>
        <taxon>Enterobacterales</taxon>
        <taxon>Enterobacteriaceae</taxon>
        <taxon>Salmonella</taxon>
    </lineage>
</organism>
<evidence type="ECO:0000255" key="1">
    <source>
        <dbReference type="HAMAP-Rule" id="MF_01030"/>
    </source>
</evidence>